<proteinExistence type="evidence at protein level"/>
<name>DGOD_RALPJ</name>
<reference key="1">
    <citation type="submission" date="2008-05" db="EMBL/GenBank/DDBJ databases">
        <title>Complete sequence of chromosome 1 of Ralstonia pickettii 12J.</title>
        <authorList>
            <person name="Lucas S."/>
            <person name="Copeland A."/>
            <person name="Lapidus A."/>
            <person name="Glavina del Rio T."/>
            <person name="Dalin E."/>
            <person name="Tice H."/>
            <person name="Bruce D."/>
            <person name="Goodwin L."/>
            <person name="Pitluck S."/>
            <person name="Meincke L."/>
            <person name="Brettin T."/>
            <person name="Detter J.C."/>
            <person name="Han C."/>
            <person name="Kuske C.R."/>
            <person name="Schmutz J."/>
            <person name="Larimer F."/>
            <person name="Land M."/>
            <person name="Hauser L."/>
            <person name="Kyrpides N."/>
            <person name="Mikhailova N."/>
            <person name="Marsh T."/>
            <person name="Richardson P."/>
        </authorList>
    </citation>
    <scope>NUCLEOTIDE SEQUENCE [LARGE SCALE GENOMIC DNA]</scope>
    <source>
        <strain>12J</strain>
    </source>
</reference>
<dbReference type="EC" id="4.2.1.6" evidence="2"/>
<dbReference type="EMBL" id="CP001068">
    <property type="protein sequence ID" value="ACD28113.1"/>
    <property type="molecule type" value="Genomic_DNA"/>
</dbReference>
<dbReference type="PDB" id="3RR1">
    <property type="method" value="X-ray"/>
    <property type="resolution" value="1.95 A"/>
    <property type="chains" value="A/B=2-382"/>
</dbReference>
<dbReference type="PDB" id="3RRA">
    <property type="method" value="X-ray"/>
    <property type="resolution" value="2.30 A"/>
    <property type="chains" value="A/B=2-382"/>
</dbReference>
<dbReference type="PDBsum" id="3RR1"/>
<dbReference type="PDBsum" id="3RRA"/>
<dbReference type="SMR" id="B2UCA8"/>
<dbReference type="STRING" id="402626.Rpic_2990"/>
<dbReference type="KEGG" id="rpi:Rpic_2990"/>
<dbReference type="PATRIC" id="fig|402626.5.peg.4126"/>
<dbReference type="eggNOG" id="COG4948">
    <property type="taxonomic scope" value="Bacteria"/>
</dbReference>
<dbReference type="HOGENOM" id="CLU_030273_3_2_4"/>
<dbReference type="UniPathway" id="UPA00081">
    <property type="reaction ID" value="UER00518"/>
</dbReference>
<dbReference type="EvolutionaryTrace" id="B2UCA8"/>
<dbReference type="GO" id="GO:0008869">
    <property type="term" value="F:galactonate dehydratase activity"/>
    <property type="evidence" value="ECO:0007669"/>
    <property type="project" value="UniProtKB-UniRule"/>
</dbReference>
<dbReference type="GO" id="GO:0000287">
    <property type="term" value="F:magnesium ion binding"/>
    <property type="evidence" value="ECO:0007669"/>
    <property type="project" value="UniProtKB-UniRule"/>
</dbReference>
<dbReference type="GO" id="GO:0009063">
    <property type="term" value="P:amino acid catabolic process"/>
    <property type="evidence" value="ECO:0007669"/>
    <property type="project" value="InterPro"/>
</dbReference>
<dbReference type="GO" id="GO:0034194">
    <property type="term" value="P:D-galactonate catabolic process"/>
    <property type="evidence" value="ECO:0007669"/>
    <property type="project" value="UniProtKB-UniRule"/>
</dbReference>
<dbReference type="CDD" id="cd03325">
    <property type="entry name" value="D-galactonate_dehydratase"/>
    <property type="match status" value="1"/>
</dbReference>
<dbReference type="FunFam" id="3.30.390.10:FF:000003">
    <property type="entry name" value="D-galactonate dehydratase"/>
    <property type="match status" value="1"/>
</dbReference>
<dbReference type="Gene3D" id="3.20.20.120">
    <property type="entry name" value="Enolase-like C-terminal domain"/>
    <property type="match status" value="1"/>
</dbReference>
<dbReference type="Gene3D" id="3.30.390.10">
    <property type="entry name" value="Enolase-like, N-terminal domain"/>
    <property type="match status" value="1"/>
</dbReference>
<dbReference type="HAMAP" id="MF_01289">
    <property type="entry name" value="Galacton_dehydrat"/>
    <property type="match status" value="1"/>
</dbReference>
<dbReference type="InterPro" id="IPR034593">
    <property type="entry name" value="DgoD-like"/>
</dbReference>
<dbReference type="InterPro" id="IPR036849">
    <property type="entry name" value="Enolase-like_C_sf"/>
</dbReference>
<dbReference type="InterPro" id="IPR029017">
    <property type="entry name" value="Enolase-like_N"/>
</dbReference>
<dbReference type="InterPro" id="IPR029065">
    <property type="entry name" value="Enolase_C-like"/>
</dbReference>
<dbReference type="InterPro" id="IPR023592">
    <property type="entry name" value="Galactonate_deHydtase"/>
</dbReference>
<dbReference type="InterPro" id="IPR018110">
    <property type="entry name" value="Mandel_Rmase/mucon_lact_enz_CS"/>
</dbReference>
<dbReference type="InterPro" id="IPR013342">
    <property type="entry name" value="Mandelate_racemase_C"/>
</dbReference>
<dbReference type="InterPro" id="IPR013341">
    <property type="entry name" value="Mandelate_racemase_N_dom"/>
</dbReference>
<dbReference type="NCBIfam" id="NF010624">
    <property type="entry name" value="PRK14017.1"/>
    <property type="match status" value="1"/>
</dbReference>
<dbReference type="PANTHER" id="PTHR48080:SF2">
    <property type="entry name" value="D-GALACTONATE DEHYDRATASE"/>
    <property type="match status" value="1"/>
</dbReference>
<dbReference type="PANTHER" id="PTHR48080">
    <property type="entry name" value="D-GALACTONATE DEHYDRATASE-RELATED"/>
    <property type="match status" value="1"/>
</dbReference>
<dbReference type="Pfam" id="PF13378">
    <property type="entry name" value="MR_MLE_C"/>
    <property type="match status" value="1"/>
</dbReference>
<dbReference type="Pfam" id="PF02746">
    <property type="entry name" value="MR_MLE_N"/>
    <property type="match status" value="1"/>
</dbReference>
<dbReference type="SFLD" id="SFLDF00003">
    <property type="entry name" value="D-galactonate_dehydratase"/>
    <property type="match status" value="1"/>
</dbReference>
<dbReference type="SFLD" id="SFLDG00179">
    <property type="entry name" value="mandelate_racemase"/>
    <property type="match status" value="1"/>
</dbReference>
<dbReference type="SMART" id="SM00922">
    <property type="entry name" value="MR_MLE"/>
    <property type="match status" value="1"/>
</dbReference>
<dbReference type="SUPFAM" id="SSF51604">
    <property type="entry name" value="Enolase C-terminal domain-like"/>
    <property type="match status" value="1"/>
</dbReference>
<dbReference type="SUPFAM" id="SSF54826">
    <property type="entry name" value="Enolase N-terminal domain-like"/>
    <property type="match status" value="1"/>
</dbReference>
<dbReference type="PROSITE" id="PS00908">
    <property type="entry name" value="MR_MLE_1"/>
    <property type="match status" value="1"/>
</dbReference>
<dbReference type="PROSITE" id="PS00909">
    <property type="entry name" value="MR_MLE_2"/>
    <property type="match status" value="1"/>
</dbReference>
<accession>B2UCA8</accession>
<gene>
    <name evidence="2" type="primary">dgoD</name>
    <name type="ordered locus">Rpic_2990</name>
</gene>
<protein>
    <recommendedName>
        <fullName evidence="2">D-galactonate dehydratase</fullName>
        <shortName evidence="2">GalD</shortName>
        <ecNumber evidence="2">4.2.1.6</ecNumber>
    </recommendedName>
</protein>
<evidence type="ECO:0000250" key="1"/>
<evidence type="ECO:0000255" key="2">
    <source>
        <dbReference type="HAMAP-Rule" id="MF_01289"/>
    </source>
</evidence>
<evidence type="ECO:0007829" key="3">
    <source>
        <dbReference type="PDB" id="3RR1"/>
    </source>
</evidence>
<sequence length="382" mass="42098">MKITRLTTYRLPPRWMFLKVETDEGVTGWGEPVIEGRARTVEAAVHELSDYLIGQDPSRINDLWQTMYRAGFYRGGPILMSAIAGIDQALWDIKGKVLGVPVYELLGGLVRDKMRTYSWVGGDRPADVIAGMKALQAGGFDHFKLNGCEEMGIIDTSRAVDAAVARVAEIRSAFGNTVEFGLDFHGRVSAPMAKVLIKELEPYRPLFIEEPVLAEQAETYARLAAHTHLPIAAGERMFSRFDFKRVLEAGGVSILQPDLSHAGGITECVKIAAMAEAYDVALAPHCPLGPIALAACLHVDFVSWNATLQEQSMGIHYNKGAELLDYVRNKADFALEGGYIRPPRLPGLGVDIDEALVIERSKEAPDWRNPVWRHADGSVAEW</sequence>
<feature type="chain" id="PRO_1000140385" description="D-galactonate dehydratase">
    <location>
        <begin position="1"/>
        <end position="382"/>
    </location>
</feature>
<feature type="active site" description="Proton donor" evidence="1">
    <location>
        <position position="185"/>
    </location>
</feature>
<feature type="active site" description="Proton acceptor" evidence="1">
    <location>
        <position position="285"/>
    </location>
</feature>
<feature type="binding site" evidence="2">
    <location>
        <position position="183"/>
    </location>
    <ligand>
        <name>Mg(2+)</name>
        <dbReference type="ChEBI" id="CHEBI:18420"/>
    </ligand>
</feature>
<feature type="binding site" evidence="2">
    <location>
        <position position="209"/>
    </location>
    <ligand>
        <name>Mg(2+)</name>
        <dbReference type="ChEBI" id="CHEBI:18420"/>
    </ligand>
</feature>
<feature type="binding site" evidence="2">
    <location>
        <position position="235"/>
    </location>
    <ligand>
        <name>Mg(2+)</name>
        <dbReference type="ChEBI" id="CHEBI:18420"/>
    </ligand>
</feature>
<feature type="site" description="Increases basicity of active site His" evidence="2">
    <location>
        <position position="258"/>
    </location>
</feature>
<feature type="site" description="Transition state stabilizer" evidence="2">
    <location>
        <position position="310"/>
    </location>
</feature>
<feature type="strand" evidence="3">
    <location>
        <begin position="3"/>
        <end position="11"/>
    </location>
</feature>
<feature type="turn" evidence="3">
    <location>
        <begin position="12"/>
        <end position="14"/>
    </location>
</feature>
<feature type="strand" evidence="3">
    <location>
        <begin position="15"/>
        <end position="22"/>
    </location>
</feature>
<feature type="strand" evidence="3">
    <location>
        <begin position="27"/>
        <end position="30"/>
    </location>
</feature>
<feature type="helix" evidence="3">
    <location>
        <begin position="38"/>
        <end position="48"/>
    </location>
</feature>
<feature type="helix" evidence="3">
    <location>
        <begin position="49"/>
        <end position="51"/>
    </location>
</feature>
<feature type="turn" evidence="3">
    <location>
        <begin position="52"/>
        <end position="54"/>
    </location>
</feature>
<feature type="helix" evidence="3">
    <location>
        <begin position="60"/>
        <end position="69"/>
    </location>
</feature>
<feature type="strand" evidence="3">
    <location>
        <begin position="71"/>
        <end position="73"/>
    </location>
</feature>
<feature type="helix" evidence="3">
    <location>
        <begin position="77"/>
        <end position="98"/>
    </location>
</feature>
<feature type="helix" evidence="3">
    <location>
        <begin position="102"/>
        <end position="105"/>
    </location>
</feature>
<feature type="strand" evidence="3">
    <location>
        <begin position="114"/>
        <end position="119"/>
    </location>
</feature>
<feature type="helix" evidence="3">
    <location>
        <begin position="125"/>
        <end position="137"/>
    </location>
</feature>
<feature type="strand" evidence="3">
    <location>
        <begin position="142"/>
        <end position="147"/>
    </location>
</feature>
<feature type="strand" evidence="3">
    <location>
        <begin position="150"/>
        <end position="152"/>
    </location>
</feature>
<feature type="helix" evidence="3">
    <location>
        <begin position="157"/>
        <end position="172"/>
    </location>
</feature>
<feature type="helix" evidence="3">
    <location>
        <begin position="175"/>
        <end position="177"/>
    </location>
</feature>
<feature type="strand" evidence="3">
    <location>
        <begin position="178"/>
        <end position="183"/>
    </location>
</feature>
<feature type="helix" evidence="3">
    <location>
        <begin position="190"/>
        <end position="200"/>
    </location>
</feature>
<feature type="helix" evidence="3">
    <location>
        <begin position="201"/>
        <end position="203"/>
    </location>
</feature>
<feature type="helix" evidence="3">
    <location>
        <begin position="218"/>
        <end position="224"/>
    </location>
</feature>
<feature type="strand" evidence="3">
    <location>
        <begin position="231"/>
        <end position="233"/>
    </location>
</feature>
<feature type="helix" evidence="3">
    <location>
        <begin position="240"/>
        <end position="249"/>
    </location>
</feature>
<feature type="strand" evidence="3">
    <location>
        <begin position="253"/>
        <end position="255"/>
    </location>
</feature>
<feature type="turn" evidence="3">
    <location>
        <begin position="259"/>
        <end position="263"/>
    </location>
</feature>
<feature type="helix" evidence="3">
    <location>
        <begin position="264"/>
        <end position="276"/>
    </location>
</feature>
<feature type="turn" evidence="3">
    <location>
        <begin position="277"/>
        <end position="279"/>
    </location>
</feature>
<feature type="helix" evidence="3">
    <location>
        <begin position="290"/>
        <end position="302"/>
    </location>
</feature>
<feature type="strand" evidence="3">
    <location>
        <begin position="309"/>
        <end position="311"/>
    </location>
</feature>
<feature type="helix" evidence="3">
    <location>
        <begin position="323"/>
        <end position="326"/>
    </location>
</feature>
<feature type="helix" evidence="3">
    <location>
        <begin position="330"/>
        <end position="333"/>
    </location>
</feature>
<feature type="strand" evidence="3">
    <location>
        <begin position="345"/>
        <end position="347"/>
    </location>
</feature>
<feature type="helix" evidence="3">
    <location>
        <begin position="354"/>
        <end position="362"/>
    </location>
</feature>
<organism>
    <name type="scientific">Ralstonia pickettii (strain 12J)</name>
    <dbReference type="NCBI Taxonomy" id="402626"/>
    <lineage>
        <taxon>Bacteria</taxon>
        <taxon>Pseudomonadati</taxon>
        <taxon>Pseudomonadota</taxon>
        <taxon>Betaproteobacteria</taxon>
        <taxon>Burkholderiales</taxon>
        <taxon>Burkholderiaceae</taxon>
        <taxon>Ralstonia</taxon>
    </lineage>
</organism>
<comment type="function">
    <text evidence="2">Catalyzes the dehydration of D-galactonate to 2-keto-3-deoxy-D-galactonate.</text>
</comment>
<comment type="catalytic activity">
    <reaction evidence="2">
        <text>D-galactonate = 2-dehydro-3-deoxy-D-galactonate + H2O</text>
        <dbReference type="Rhea" id="RHEA:18649"/>
        <dbReference type="ChEBI" id="CHEBI:12931"/>
        <dbReference type="ChEBI" id="CHEBI:15377"/>
        <dbReference type="ChEBI" id="CHEBI:57989"/>
        <dbReference type="EC" id="4.2.1.6"/>
    </reaction>
</comment>
<comment type="cofactor">
    <cofactor evidence="2">
        <name>Mg(2+)</name>
        <dbReference type="ChEBI" id="CHEBI:18420"/>
    </cofactor>
    <text evidence="2">Binds 1 Mg(2+) ion per subunit.</text>
</comment>
<comment type="pathway">
    <text evidence="2">Carbohydrate acid metabolism; D-galactonate degradation; D-glyceraldehyde 3-phosphate and pyruvate from D-galactonate: step 1/3.</text>
</comment>
<comment type="miscellaneous">
    <text evidence="2">Reaction proceeds via an anti dehydration.</text>
</comment>
<comment type="similarity">
    <text evidence="2">Belongs to the mandelate racemase/muconate lactonizing enzyme family. GalD subfamily.</text>
</comment>
<keyword id="KW-0002">3D-structure</keyword>
<keyword id="KW-0456">Lyase</keyword>
<keyword id="KW-0460">Magnesium</keyword>
<keyword id="KW-0479">Metal-binding</keyword>